<dbReference type="EMBL" id="AF032975">
    <property type="protein sequence ID" value="AAC04836.1"/>
    <property type="molecule type" value="mRNA"/>
</dbReference>
<dbReference type="EMBL" id="AF051156">
    <property type="protein sequence ID" value="AAC05682.1"/>
    <property type="molecule type" value="mRNA"/>
</dbReference>
<dbReference type="EMBL" id="AB010876">
    <property type="protein sequence ID" value="BAA74702.1"/>
    <property type="molecule type" value="mRNA"/>
</dbReference>
<dbReference type="EMBL" id="AB015593">
    <property type="protein sequence ID" value="BAB17848.1"/>
    <property type="molecule type" value="Genomic_DNA"/>
</dbReference>
<dbReference type="EMBL" id="AP004586">
    <property type="protein sequence ID" value="BAD09603.1"/>
    <property type="molecule type" value="Genomic_DNA"/>
</dbReference>
<dbReference type="EMBL" id="AP004707">
    <property type="protein sequence ID" value="BAD09958.1"/>
    <property type="molecule type" value="Genomic_DNA"/>
</dbReference>
<dbReference type="EMBL" id="AP008214">
    <property type="protein sequence ID" value="BAF23890.1"/>
    <property type="molecule type" value="Genomic_DNA"/>
</dbReference>
<dbReference type="EMBL" id="AP014964">
    <property type="protein sequence ID" value="BAT05757.1"/>
    <property type="molecule type" value="Genomic_DNA"/>
</dbReference>
<dbReference type="EMBL" id="CM000145">
    <property type="protein sequence ID" value="EAZ42986.1"/>
    <property type="molecule type" value="Genomic_DNA"/>
</dbReference>
<dbReference type="EMBL" id="AK065284">
    <property type="protein sequence ID" value="BAG89446.1"/>
    <property type="molecule type" value="mRNA"/>
</dbReference>
<dbReference type="EMBL" id="AK104729">
    <property type="protein sequence ID" value="BAG96911.1"/>
    <property type="molecule type" value="mRNA"/>
</dbReference>
<dbReference type="PIR" id="T02871">
    <property type="entry name" value="T02871"/>
</dbReference>
<dbReference type="RefSeq" id="XP_015648639.1">
    <property type="nucleotide sequence ID" value="XM_015793153.1"/>
</dbReference>
<dbReference type="SMR" id="Q6ZBZ2"/>
<dbReference type="FunCoup" id="Q6ZBZ2">
    <property type="interactions" value="1870"/>
</dbReference>
<dbReference type="STRING" id="39947.Q6ZBZ2"/>
<dbReference type="GlyCosmos" id="Q6ZBZ2">
    <property type="glycosylation" value="1 site, No reported glycans"/>
</dbReference>
<dbReference type="PaxDb" id="39947-Q6ZBZ2"/>
<dbReference type="EnsemblPlants" id="Os08t0460000-01">
    <property type="protein sequence ID" value="Os08t0460000-01"/>
    <property type="gene ID" value="Os08g0460000"/>
</dbReference>
<dbReference type="Gramene" id="Os08t0460000-01">
    <property type="protein sequence ID" value="Os08t0460000-01"/>
    <property type="gene ID" value="Os08g0460000"/>
</dbReference>
<dbReference type="KEGG" id="dosa:Os08g0460000"/>
<dbReference type="eggNOG" id="ENOG502QT7C">
    <property type="taxonomic scope" value="Eukaryota"/>
</dbReference>
<dbReference type="HOGENOM" id="CLU_015790_0_2_1"/>
<dbReference type="InParanoid" id="Q6ZBZ2"/>
<dbReference type="OMA" id="MFIPIFF"/>
<dbReference type="OrthoDB" id="1921208at2759"/>
<dbReference type="Proteomes" id="UP000000763">
    <property type="component" value="Chromosome 8"/>
</dbReference>
<dbReference type="Proteomes" id="UP000007752">
    <property type="component" value="Chromosome 8"/>
</dbReference>
<dbReference type="Proteomes" id="UP000059680">
    <property type="component" value="Chromosome 8"/>
</dbReference>
<dbReference type="GO" id="GO:0048046">
    <property type="term" value="C:apoplast"/>
    <property type="evidence" value="ECO:0007669"/>
    <property type="project" value="UniProtKB-SubCell"/>
</dbReference>
<dbReference type="GO" id="GO:0031012">
    <property type="term" value="C:extracellular matrix"/>
    <property type="evidence" value="ECO:0000318"/>
    <property type="project" value="GO_Central"/>
</dbReference>
<dbReference type="GO" id="GO:0030145">
    <property type="term" value="F:manganese ion binding"/>
    <property type="evidence" value="ECO:0007669"/>
    <property type="project" value="InterPro"/>
</dbReference>
<dbReference type="CDD" id="cd02241">
    <property type="entry name" value="cupin_OxOx"/>
    <property type="match status" value="1"/>
</dbReference>
<dbReference type="FunFam" id="2.60.120.10:FF:000047">
    <property type="entry name" value="Auxin-binding protein ABP19a"/>
    <property type="match status" value="1"/>
</dbReference>
<dbReference type="Gene3D" id="2.60.120.10">
    <property type="entry name" value="Jelly Rolls"/>
    <property type="match status" value="1"/>
</dbReference>
<dbReference type="InterPro" id="IPR006045">
    <property type="entry name" value="Cupin_1"/>
</dbReference>
<dbReference type="InterPro" id="IPR001929">
    <property type="entry name" value="Germin"/>
</dbReference>
<dbReference type="InterPro" id="IPR019780">
    <property type="entry name" value="Germin_Mn-BS"/>
</dbReference>
<dbReference type="InterPro" id="IPR014710">
    <property type="entry name" value="RmlC-like_jellyroll"/>
</dbReference>
<dbReference type="InterPro" id="IPR011051">
    <property type="entry name" value="RmlC_Cupin_sf"/>
</dbReference>
<dbReference type="PANTHER" id="PTHR31238">
    <property type="entry name" value="GERMIN-LIKE PROTEIN SUBFAMILY 3 MEMBER 3"/>
    <property type="match status" value="1"/>
</dbReference>
<dbReference type="Pfam" id="PF00190">
    <property type="entry name" value="Cupin_1"/>
    <property type="match status" value="1"/>
</dbReference>
<dbReference type="PRINTS" id="PR00325">
    <property type="entry name" value="GERMIN"/>
</dbReference>
<dbReference type="SMART" id="SM00835">
    <property type="entry name" value="Cupin_1"/>
    <property type="match status" value="1"/>
</dbReference>
<dbReference type="SUPFAM" id="SSF51182">
    <property type="entry name" value="RmlC-like cupins"/>
    <property type="match status" value="1"/>
</dbReference>
<dbReference type="PROSITE" id="PS00725">
    <property type="entry name" value="GERMIN"/>
    <property type="match status" value="1"/>
</dbReference>
<organism>
    <name type="scientific">Oryza sativa subsp. japonica</name>
    <name type="common">Rice</name>
    <dbReference type="NCBI Taxonomy" id="39947"/>
    <lineage>
        <taxon>Eukaryota</taxon>
        <taxon>Viridiplantae</taxon>
        <taxon>Streptophyta</taxon>
        <taxon>Embryophyta</taxon>
        <taxon>Tracheophyta</taxon>
        <taxon>Spermatophyta</taxon>
        <taxon>Magnoliopsida</taxon>
        <taxon>Liliopsida</taxon>
        <taxon>Poales</taxon>
        <taxon>Poaceae</taxon>
        <taxon>BOP clade</taxon>
        <taxon>Oryzoideae</taxon>
        <taxon>Oryzeae</taxon>
        <taxon>Oryzinae</taxon>
        <taxon>Oryza</taxon>
        <taxon>Oryza sativa</taxon>
    </lineage>
</organism>
<proteinExistence type="evidence at protein level"/>
<reference key="1">
    <citation type="online journal article" date="1998" name="Plant Gene Register">
        <title>The rice genome expresses at least six different genes for oxalate oxidase/germin-like proteins.</title>
        <authorList>
            <person name="Membre N."/>
            <person name="Bernier F."/>
        </authorList>
        <locator>PGR98-021</locator>
    </citation>
    <scope>NUCLEOTIDE SEQUENCE [MRNA]</scope>
    <source>
        <strain>cv. Nipponbare</strain>
    </source>
</reference>
<reference key="2">
    <citation type="submission" date="1998-02" db="EMBL/GenBank/DDBJ databases">
        <title>Molecular cloning and characterization of a cDNA encoding germin-like protein in rice.</title>
        <authorList>
            <person name="Yoon U.H."/>
            <person name="Hahn J.H."/>
            <person name="Yun C.-H."/>
            <person name="Eun M.-Y."/>
        </authorList>
    </citation>
    <scope>NUCLEOTIDE SEQUENCE [MRNA]</scope>
    <source>
        <strain>cv. Ilpoombyeo</strain>
    </source>
</reference>
<reference key="3">
    <citation type="submission" date="1998-06" db="EMBL/GenBank/DDBJ databases">
        <title>Molecular cloning and characterization of a gene encoding germin-like protein in rice.</title>
        <authorList>
            <person name="Yoshizawa C."/>
            <person name="Ono M."/>
            <person name="Inoue M."/>
        </authorList>
    </citation>
    <scope>NUCLEOTIDE SEQUENCE [GENOMIC DNA / MRNA]</scope>
    <source>
        <strain>cv. Akitakomachi</strain>
    </source>
</reference>
<reference key="4">
    <citation type="journal article" date="2005" name="Nature">
        <title>The map-based sequence of the rice genome.</title>
        <authorList>
            <consortium name="International rice genome sequencing project (IRGSP)"/>
        </authorList>
    </citation>
    <scope>NUCLEOTIDE SEQUENCE [LARGE SCALE GENOMIC DNA]</scope>
    <source>
        <strain>cv. Nipponbare</strain>
    </source>
</reference>
<reference key="5">
    <citation type="journal article" date="2008" name="Nucleic Acids Res.">
        <title>The rice annotation project database (RAP-DB): 2008 update.</title>
        <authorList>
            <consortium name="The rice annotation project (RAP)"/>
        </authorList>
    </citation>
    <scope>GENOME REANNOTATION</scope>
    <source>
        <strain>cv. Nipponbare</strain>
    </source>
</reference>
<reference key="6">
    <citation type="journal article" date="2013" name="Rice">
        <title>Improvement of the Oryza sativa Nipponbare reference genome using next generation sequence and optical map data.</title>
        <authorList>
            <person name="Kawahara Y."/>
            <person name="de la Bastide M."/>
            <person name="Hamilton J.P."/>
            <person name="Kanamori H."/>
            <person name="McCombie W.R."/>
            <person name="Ouyang S."/>
            <person name="Schwartz D.C."/>
            <person name="Tanaka T."/>
            <person name="Wu J."/>
            <person name="Zhou S."/>
            <person name="Childs K.L."/>
            <person name="Davidson R.M."/>
            <person name="Lin H."/>
            <person name="Quesada-Ocampo L."/>
            <person name="Vaillancourt B."/>
            <person name="Sakai H."/>
            <person name="Lee S.S."/>
            <person name="Kim J."/>
            <person name="Numa H."/>
            <person name="Itoh T."/>
            <person name="Buell C.R."/>
            <person name="Matsumoto T."/>
        </authorList>
    </citation>
    <scope>GENOME REANNOTATION</scope>
    <source>
        <strain>cv. Nipponbare</strain>
    </source>
</reference>
<reference key="7">
    <citation type="journal article" date="2005" name="PLoS Biol.">
        <title>The genomes of Oryza sativa: a history of duplications.</title>
        <authorList>
            <person name="Yu J."/>
            <person name="Wang J."/>
            <person name="Lin W."/>
            <person name="Li S."/>
            <person name="Li H."/>
            <person name="Zhou J."/>
            <person name="Ni P."/>
            <person name="Dong W."/>
            <person name="Hu S."/>
            <person name="Zeng C."/>
            <person name="Zhang J."/>
            <person name="Zhang Y."/>
            <person name="Li R."/>
            <person name="Xu Z."/>
            <person name="Li S."/>
            <person name="Li X."/>
            <person name="Zheng H."/>
            <person name="Cong L."/>
            <person name="Lin L."/>
            <person name="Yin J."/>
            <person name="Geng J."/>
            <person name="Li G."/>
            <person name="Shi J."/>
            <person name="Liu J."/>
            <person name="Lv H."/>
            <person name="Li J."/>
            <person name="Wang J."/>
            <person name="Deng Y."/>
            <person name="Ran L."/>
            <person name="Shi X."/>
            <person name="Wang X."/>
            <person name="Wu Q."/>
            <person name="Li C."/>
            <person name="Ren X."/>
            <person name="Wang J."/>
            <person name="Wang X."/>
            <person name="Li D."/>
            <person name="Liu D."/>
            <person name="Zhang X."/>
            <person name="Ji Z."/>
            <person name="Zhao W."/>
            <person name="Sun Y."/>
            <person name="Zhang Z."/>
            <person name="Bao J."/>
            <person name="Han Y."/>
            <person name="Dong L."/>
            <person name="Ji J."/>
            <person name="Chen P."/>
            <person name="Wu S."/>
            <person name="Liu J."/>
            <person name="Xiao Y."/>
            <person name="Bu D."/>
            <person name="Tan J."/>
            <person name="Yang L."/>
            <person name="Ye C."/>
            <person name="Zhang J."/>
            <person name="Xu J."/>
            <person name="Zhou Y."/>
            <person name="Yu Y."/>
            <person name="Zhang B."/>
            <person name="Zhuang S."/>
            <person name="Wei H."/>
            <person name="Liu B."/>
            <person name="Lei M."/>
            <person name="Yu H."/>
            <person name="Li Y."/>
            <person name="Xu H."/>
            <person name="Wei S."/>
            <person name="He X."/>
            <person name="Fang L."/>
            <person name="Zhang Z."/>
            <person name="Zhang Y."/>
            <person name="Huang X."/>
            <person name="Su Z."/>
            <person name="Tong W."/>
            <person name="Li J."/>
            <person name="Tong Z."/>
            <person name="Li S."/>
            <person name="Ye J."/>
            <person name="Wang L."/>
            <person name="Fang L."/>
            <person name="Lei T."/>
            <person name="Chen C.-S."/>
            <person name="Chen H.-C."/>
            <person name="Xu Z."/>
            <person name="Li H."/>
            <person name="Huang H."/>
            <person name="Zhang F."/>
            <person name="Xu H."/>
            <person name="Li N."/>
            <person name="Zhao C."/>
            <person name="Li S."/>
            <person name="Dong L."/>
            <person name="Huang Y."/>
            <person name="Li L."/>
            <person name="Xi Y."/>
            <person name="Qi Q."/>
            <person name="Li W."/>
            <person name="Zhang B."/>
            <person name="Hu W."/>
            <person name="Zhang Y."/>
            <person name="Tian X."/>
            <person name="Jiao Y."/>
            <person name="Liang X."/>
            <person name="Jin J."/>
            <person name="Gao L."/>
            <person name="Zheng W."/>
            <person name="Hao B."/>
            <person name="Liu S.-M."/>
            <person name="Wang W."/>
            <person name="Yuan L."/>
            <person name="Cao M."/>
            <person name="McDermott J."/>
            <person name="Samudrala R."/>
            <person name="Wang J."/>
            <person name="Wong G.K.-S."/>
            <person name="Yang H."/>
        </authorList>
    </citation>
    <scope>NUCLEOTIDE SEQUENCE [LARGE SCALE GENOMIC DNA]</scope>
    <source>
        <strain>cv. Nipponbare</strain>
    </source>
</reference>
<reference key="8">
    <citation type="journal article" date="2003" name="Science">
        <title>Collection, mapping, and annotation of over 28,000 cDNA clones from japonica rice.</title>
        <authorList>
            <consortium name="The rice full-length cDNA consortium"/>
        </authorList>
    </citation>
    <scope>NUCLEOTIDE SEQUENCE [LARGE SCALE MRNA]</scope>
    <source>
        <strain>cv. Nipponbare</strain>
    </source>
</reference>
<reference key="9">
    <citation type="journal article" date="2006" name="Proteomics">
        <title>Proteomic analysis of rice leaf, stem and root tissues during growth course.</title>
        <authorList>
            <person name="Nozu Y."/>
            <person name="Tsugita A."/>
            <person name="Kamijo K."/>
        </authorList>
    </citation>
    <scope>PROTEIN SEQUENCE [LARGE SCALE ANALYSIS] OF 24-30</scope>
    <scope>IDENTIFICATION BY MASS SPECTROMETRY</scope>
    <source>
        <strain>cv. Nipponbare</strain>
    </source>
</reference>
<reference key="10">
    <citation type="journal article" date="2009" name="Biochem. Biophys. Res. Commun.">
        <title>Differential regulation of proteins and phosphoproteins in rice under drought stress.</title>
        <authorList>
            <person name="Ke Y."/>
            <person name="Han G."/>
            <person name="He H."/>
            <person name="Li J."/>
        </authorList>
    </citation>
    <scope>INDUCTION</scope>
    <scope>PHOSPHORYLATION</scope>
    <scope>IDENTIFICATION BY MASS SPECTROMETRY</scope>
</reference>
<protein>
    <recommendedName>
        <fullName>Germin-like protein 8-14</fullName>
    </recommendedName>
    <alternativeName>
        <fullName>Germin-like protein 1</fullName>
    </alternativeName>
    <alternativeName>
        <fullName>Germin-like protein 5</fullName>
        <shortName>OsGER5</shortName>
    </alternativeName>
</protein>
<comment type="function">
    <text>May play a role in plant defense. Probably has no oxalate oxidase activity even if the active site is conserved.</text>
</comment>
<comment type="subunit">
    <text evidence="1">Oligomer (believed to be a pentamer but probably hexamer).</text>
</comment>
<comment type="subcellular location">
    <subcellularLocation>
        <location evidence="1">Secreted</location>
        <location evidence="1">Extracellular space</location>
        <location evidence="1">Apoplast</location>
    </subcellularLocation>
</comment>
<comment type="induction">
    <text evidence="4">Down-regulated by drought stress.</text>
</comment>
<comment type="PTM">
    <text evidence="4">Phosphorylated on threonine residue.</text>
</comment>
<comment type="similarity">
    <text evidence="5">Belongs to the germin family.</text>
</comment>
<name>GL814_ORYSJ</name>
<feature type="signal peptide" evidence="3">
    <location>
        <begin position="1"/>
        <end position="23"/>
    </location>
</feature>
<feature type="chain" id="PRO_0000365526" description="Germin-like protein 8-14">
    <location>
        <begin position="24"/>
        <end position="213"/>
    </location>
</feature>
<feature type="domain" description="Cupin type-1" evidence="2">
    <location>
        <begin position="56"/>
        <end position="203"/>
    </location>
</feature>
<feature type="binding site" evidence="1">
    <location>
        <position position="104"/>
    </location>
    <ligand>
        <name>Mn(2+)</name>
        <dbReference type="ChEBI" id="CHEBI:29035"/>
    </ligand>
</feature>
<feature type="binding site" evidence="1">
    <location>
        <position position="106"/>
    </location>
    <ligand>
        <name>Mn(2+)</name>
        <dbReference type="ChEBI" id="CHEBI:29035"/>
    </ligand>
</feature>
<feature type="binding site" evidence="1">
    <location>
        <position position="111"/>
    </location>
    <ligand>
        <name>Mn(2+)</name>
        <dbReference type="ChEBI" id="CHEBI:29035"/>
    </ligand>
</feature>
<feature type="binding site" evidence="1">
    <location>
        <position position="151"/>
    </location>
    <ligand>
        <name>Mn(2+)</name>
        <dbReference type="ChEBI" id="CHEBI:29035"/>
    </ligand>
</feature>
<feature type="glycosylation site" description="N-linked (GlcNAc...) asparagine" evidence="2">
    <location>
        <position position="63"/>
    </location>
</feature>
<feature type="disulfide bond" evidence="1">
    <location>
        <begin position="29"/>
        <end position="44"/>
    </location>
</feature>
<feature type="sequence conflict" description="In Ref. 2; AAC05682." evidence="5" ref="2">
    <original>R</original>
    <variation>K</variation>
    <location>
        <position position="92"/>
    </location>
</feature>
<feature type="sequence conflict" description="In Ref. 3; BAA74702." evidence="5" ref="3">
    <original>A</original>
    <variation>G</variation>
    <location>
        <position position="166"/>
    </location>
</feature>
<feature type="sequence conflict" description="In Ref. 3; BAA74702." evidence="5" ref="3">
    <original>T</original>
    <variation>N</variation>
    <location>
        <position position="177"/>
    </location>
</feature>
<accession>Q6ZBZ2</accession>
<accession>A0A0P0XGL0</accession>
<accession>O49001</accession>
<accession>O65044</accession>
<accession>Q9SAZ9</accession>
<keyword id="KW-0052">Apoplast</keyword>
<keyword id="KW-0903">Direct protein sequencing</keyword>
<keyword id="KW-1015">Disulfide bond</keyword>
<keyword id="KW-0325">Glycoprotein</keyword>
<keyword id="KW-0464">Manganese</keyword>
<keyword id="KW-0479">Metal-binding</keyword>
<keyword id="KW-0597">Phosphoprotein</keyword>
<keyword id="KW-1185">Reference proteome</keyword>
<keyword id="KW-0964">Secreted</keyword>
<keyword id="KW-0732">Signal</keyword>
<evidence type="ECO:0000250" key="1"/>
<evidence type="ECO:0000255" key="2"/>
<evidence type="ECO:0000269" key="3">
    <source>
    </source>
</evidence>
<evidence type="ECO:0000269" key="4">
    <source>
    </source>
</evidence>
<evidence type="ECO:0000305" key="5"/>
<sequence length="213" mass="21861">MAKAVMMLPVLLSFLLLPFSSMALTQDFCVADLTCSDTPAGYPCKASVGAGDFAYHGLAAAGNTSNLIKAAVTPAFVGQFPGVNGLGISAARLDIAVGGVVPLHTHPAASELLFVTQGTVAAGFITSSSNTVYTRTLYAGDIMVFPQGLLHYQYNAGQSAAVALVAFSGPNPGLQITDYALFANNLPSAIVEKVTFLDDAQVKKLKSVLGGSG</sequence>
<gene>
    <name type="primary">GER5</name>
    <name type="synonym">GLP1</name>
    <name type="synonym">GLP110</name>
    <name type="ordered locus">Os08g0460000</name>
    <name type="ordered locus">LOC_Os08g35760</name>
    <name type="ORF">OsJ_026469</name>
    <name type="ORF">P0493A04.40</name>
    <name type="ORF">P0690E03.8</name>
</gene>